<gene>
    <name evidence="1" type="primary">ydiU</name>
    <name evidence="1" type="synonym">selO</name>
    <name type="ordered locus">SPA1498</name>
</gene>
<evidence type="ECO:0000255" key="1">
    <source>
        <dbReference type="HAMAP-Rule" id="MF_00692"/>
    </source>
</evidence>
<reference key="1">
    <citation type="journal article" date="2004" name="Nat. Genet.">
        <title>Comparison of genome degradation in Paratyphi A and Typhi, human-restricted serovars of Salmonella enterica that cause typhoid.</title>
        <authorList>
            <person name="McClelland M."/>
            <person name="Sanderson K.E."/>
            <person name="Clifton S.W."/>
            <person name="Latreille P."/>
            <person name="Porwollik S."/>
            <person name="Sabo A."/>
            <person name="Meyer R."/>
            <person name="Bieri T."/>
            <person name="Ozersky P."/>
            <person name="McLellan M."/>
            <person name="Harkins C.R."/>
            <person name="Wang C."/>
            <person name="Nguyen C."/>
            <person name="Berghoff A."/>
            <person name="Elliott G."/>
            <person name="Kohlberg S."/>
            <person name="Strong C."/>
            <person name="Du F."/>
            <person name="Carter J."/>
            <person name="Kremizki C."/>
            <person name="Layman D."/>
            <person name="Leonard S."/>
            <person name="Sun H."/>
            <person name="Fulton L."/>
            <person name="Nash W."/>
            <person name="Miner T."/>
            <person name="Minx P."/>
            <person name="Delehaunty K."/>
            <person name="Fronick C."/>
            <person name="Magrini V."/>
            <person name="Nhan M."/>
            <person name="Warren W."/>
            <person name="Florea L."/>
            <person name="Spieth J."/>
            <person name="Wilson R.K."/>
        </authorList>
    </citation>
    <scope>NUCLEOTIDE SEQUENCE [LARGE SCALE GENOMIC DNA]</scope>
    <source>
        <strain>ATCC 9150 / SARB42</strain>
    </source>
</reference>
<keyword id="KW-0067">ATP-binding</keyword>
<keyword id="KW-0460">Magnesium</keyword>
<keyword id="KW-0464">Manganese</keyword>
<keyword id="KW-0479">Metal-binding</keyword>
<keyword id="KW-0547">Nucleotide-binding</keyword>
<keyword id="KW-0548">Nucleotidyltransferase</keyword>
<keyword id="KW-0808">Transferase</keyword>
<dbReference type="EC" id="2.7.7.-" evidence="1"/>
<dbReference type="EC" id="2.7.7.108" evidence="1"/>
<dbReference type="EMBL" id="CP000026">
    <property type="protein sequence ID" value="AAV77431.1"/>
    <property type="molecule type" value="Genomic_DNA"/>
</dbReference>
<dbReference type="RefSeq" id="WP_000175667.1">
    <property type="nucleotide sequence ID" value="NC_006511.1"/>
</dbReference>
<dbReference type="SMR" id="Q5PH84"/>
<dbReference type="KEGG" id="spt:SPA1498"/>
<dbReference type="HOGENOM" id="CLU_010245_4_1_6"/>
<dbReference type="Proteomes" id="UP000008185">
    <property type="component" value="Chromosome"/>
</dbReference>
<dbReference type="GO" id="GO:0070733">
    <property type="term" value="F:AMPylase activity"/>
    <property type="evidence" value="ECO:0007669"/>
    <property type="project" value="RHEA"/>
</dbReference>
<dbReference type="GO" id="GO:0005524">
    <property type="term" value="F:ATP binding"/>
    <property type="evidence" value="ECO:0007669"/>
    <property type="project" value="UniProtKB-UniRule"/>
</dbReference>
<dbReference type="GO" id="GO:0000287">
    <property type="term" value="F:magnesium ion binding"/>
    <property type="evidence" value="ECO:0007669"/>
    <property type="project" value="UniProtKB-UniRule"/>
</dbReference>
<dbReference type="HAMAP" id="MF_00692">
    <property type="entry name" value="YdiU_SelO"/>
    <property type="match status" value="1"/>
</dbReference>
<dbReference type="InterPro" id="IPR054838">
    <property type="entry name" value="adnlytase_SelO"/>
</dbReference>
<dbReference type="InterPro" id="IPR003846">
    <property type="entry name" value="SelO"/>
</dbReference>
<dbReference type="NCBIfam" id="NF040880">
    <property type="entry name" value="adnlytase_SelO"/>
    <property type="match status" value="1"/>
</dbReference>
<dbReference type="NCBIfam" id="NF000658">
    <property type="entry name" value="PRK00029.1"/>
    <property type="match status" value="1"/>
</dbReference>
<dbReference type="PANTHER" id="PTHR32057">
    <property type="entry name" value="PROTEIN ADENYLYLTRANSFERASE SELO, MITOCHONDRIAL"/>
    <property type="match status" value="1"/>
</dbReference>
<dbReference type="PANTHER" id="PTHR32057:SF14">
    <property type="entry name" value="PROTEIN ADENYLYLTRANSFERASE SELO, MITOCHONDRIAL"/>
    <property type="match status" value="1"/>
</dbReference>
<dbReference type="Pfam" id="PF02696">
    <property type="entry name" value="SelO"/>
    <property type="match status" value="1"/>
</dbReference>
<feature type="chain" id="PRO_0000271864" description="Protein nucleotidyltransferase YdiU">
    <location>
        <begin position="1"/>
        <end position="480"/>
    </location>
</feature>
<feature type="active site" description="Proton acceptor" evidence="1">
    <location>
        <position position="248"/>
    </location>
</feature>
<feature type="binding site" evidence="1">
    <location>
        <position position="86"/>
    </location>
    <ligand>
        <name>ATP</name>
        <dbReference type="ChEBI" id="CHEBI:30616"/>
    </ligand>
</feature>
<feature type="binding site" evidence="1">
    <location>
        <position position="88"/>
    </location>
    <ligand>
        <name>ATP</name>
        <dbReference type="ChEBI" id="CHEBI:30616"/>
    </ligand>
</feature>
<feature type="binding site" evidence="1">
    <location>
        <position position="89"/>
    </location>
    <ligand>
        <name>ATP</name>
        <dbReference type="ChEBI" id="CHEBI:30616"/>
    </ligand>
</feature>
<feature type="binding site" evidence="1">
    <location>
        <position position="109"/>
    </location>
    <ligand>
        <name>ATP</name>
        <dbReference type="ChEBI" id="CHEBI:30616"/>
    </ligand>
</feature>
<feature type="binding site" evidence="1">
    <location>
        <position position="121"/>
    </location>
    <ligand>
        <name>ATP</name>
        <dbReference type="ChEBI" id="CHEBI:30616"/>
    </ligand>
</feature>
<feature type="binding site" evidence="1">
    <location>
        <position position="122"/>
    </location>
    <ligand>
        <name>ATP</name>
        <dbReference type="ChEBI" id="CHEBI:30616"/>
    </ligand>
</feature>
<feature type="binding site" evidence="1">
    <location>
        <position position="172"/>
    </location>
    <ligand>
        <name>ATP</name>
        <dbReference type="ChEBI" id="CHEBI:30616"/>
    </ligand>
</feature>
<feature type="binding site" evidence="1">
    <location>
        <position position="179"/>
    </location>
    <ligand>
        <name>ATP</name>
        <dbReference type="ChEBI" id="CHEBI:30616"/>
    </ligand>
</feature>
<feature type="binding site" evidence="1">
    <location>
        <position position="249"/>
    </location>
    <ligand>
        <name>Mg(2+)</name>
        <dbReference type="ChEBI" id="CHEBI:18420"/>
    </ligand>
</feature>
<feature type="binding site" evidence="1">
    <location>
        <position position="258"/>
    </location>
    <ligand>
        <name>ATP</name>
        <dbReference type="ChEBI" id="CHEBI:30616"/>
    </ligand>
</feature>
<feature type="binding site" evidence="1">
    <location>
        <position position="258"/>
    </location>
    <ligand>
        <name>Mg(2+)</name>
        <dbReference type="ChEBI" id="CHEBI:18420"/>
    </ligand>
</feature>
<comment type="function">
    <text evidence="1">Nucleotidyltransferase involved in the post-translational modification of proteins. It can catalyze the addition of adenosine monophosphate (AMP) or uridine monophosphate (UMP) to a protein, resulting in modifications known as AMPylation and UMPylation.</text>
</comment>
<comment type="catalytic activity">
    <reaction evidence="1">
        <text>L-seryl-[protein] + ATP = 3-O-(5'-adenylyl)-L-seryl-[protein] + diphosphate</text>
        <dbReference type="Rhea" id="RHEA:58120"/>
        <dbReference type="Rhea" id="RHEA-COMP:9863"/>
        <dbReference type="Rhea" id="RHEA-COMP:15073"/>
        <dbReference type="ChEBI" id="CHEBI:29999"/>
        <dbReference type="ChEBI" id="CHEBI:30616"/>
        <dbReference type="ChEBI" id="CHEBI:33019"/>
        <dbReference type="ChEBI" id="CHEBI:142516"/>
        <dbReference type="EC" id="2.7.7.108"/>
    </reaction>
</comment>
<comment type="catalytic activity">
    <reaction evidence="1">
        <text>L-threonyl-[protein] + ATP = 3-O-(5'-adenylyl)-L-threonyl-[protein] + diphosphate</text>
        <dbReference type="Rhea" id="RHEA:54292"/>
        <dbReference type="Rhea" id="RHEA-COMP:11060"/>
        <dbReference type="Rhea" id="RHEA-COMP:13847"/>
        <dbReference type="ChEBI" id="CHEBI:30013"/>
        <dbReference type="ChEBI" id="CHEBI:30616"/>
        <dbReference type="ChEBI" id="CHEBI:33019"/>
        <dbReference type="ChEBI" id="CHEBI:138113"/>
        <dbReference type="EC" id="2.7.7.108"/>
    </reaction>
</comment>
<comment type="catalytic activity">
    <reaction evidence="1">
        <text>L-tyrosyl-[protein] + ATP = O-(5'-adenylyl)-L-tyrosyl-[protein] + diphosphate</text>
        <dbReference type="Rhea" id="RHEA:54288"/>
        <dbReference type="Rhea" id="RHEA-COMP:10136"/>
        <dbReference type="Rhea" id="RHEA-COMP:13846"/>
        <dbReference type="ChEBI" id="CHEBI:30616"/>
        <dbReference type="ChEBI" id="CHEBI:33019"/>
        <dbReference type="ChEBI" id="CHEBI:46858"/>
        <dbReference type="ChEBI" id="CHEBI:83624"/>
        <dbReference type="EC" id="2.7.7.108"/>
    </reaction>
</comment>
<comment type="catalytic activity">
    <reaction evidence="1">
        <text>L-histidyl-[protein] + UTP = N(tele)-(5'-uridylyl)-L-histidyl-[protein] + diphosphate</text>
        <dbReference type="Rhea" id="RHEA:83891"/>
        <dbReference type="Rhea" id="RHEA-COMP:9745"/>
        <dbReference type="Rhea" id="RHEA-COMP:20239"/>
        <dbReference type="ChEBI" id="CHEBI:29979"/>
        <dbReference type="ChEBI" id="CHEBI:33019"/>
        <dbReference type="ChEBI" id="CHEBI:46398"/>
        <dbReference type="ChEBI" id="CHEBI:233474"/>
    </reaction>
</comment>
<comment type="catalytic activity">
    <reaction evidence="1">
        <text>L-seryl-[protein] + UTP = O-(5'-uridylyl)-L-seryl-[protein] + diphosphate</text>
        <dbReference type="Rhea" id="RHEA:64604"/>
        <dbReference type="Rhea" id="RHEA-COMP:9863"/>
        <dbReference type="Rhea" id="RHEA-COMP:16635"/>
        <dbReference type="ChEBI" id="CHEBI:29999"/>
        <dbReference type="ChEBI" id="CHEBI:33019"/>
        <dbReference type="ChEBI" id="CHEBI:46398"/>
        <dbReference type="ChEBI" id="CHEBI:156051"/>
    </reaction>
</comment>
<comment type="catalytic activity">
    <reaction evidence="1">
        <text>L-tyrosyl-[protein] + UTP = O-(5'-uridylyl)-L-tyrosyl-[protein] + diphosphate</text>
        <dbReference type="Rhea" id="RHEA:83887"/>
        <dbReference type="Rhea" id="RHEA-COMP:10136"/>
        <dbReference type="Rhea" id="RHEA-COMP:20238"/>
        <dbReference type="ChEBI" id="CHEBI:33019"/>
        <dbReference type="ChEBI" id="CHEBI:46398"/>
        <dbReference type="ChEBI" id="CHEBI:46858"/>
        <dbReference type="ChEBI" id="CHEBI:90602"/>
    </reaction>
</comment>
<comment type="cofactor">
    <cofactor evidence="1">
        <name>Mg(2+)</name>
        <dbReference type="ChEBI" id="CHEBI:18420"/>
    </cofactor>
    <cofactor evidence="1">
        <name>Mn(2+)</name>
        <dbReference type="ChEBI" id="CHEBI:29035"/>
    </cofactor>
</comment>
<comment type="similarity">
    <text evidence="1">Belongs to the SELO family.</text>
</comment>
<proteinExistence type="inferred from homology"/>
<name>SELO_SALPA</name>
<organism>
    <name type="scientific">Salmonella paratyphi A (strain ATCC 9150 / SARB42)</name>
    <dbReference type="NCBI Taxonomy" id="295319"/>
    <lineage>
        <taxon>Bacteria</taxon>
        <taxon>Pseudomonadati</taxon>
        <taxon>Pseudomonadota</taxon>
        <taxon>Gammaproteobacteria</taxon>
        <taxon>Enterobacterales</taxon>
        <taxon>Enterobacteriaceae</taxon>
        <taxon>Salmonella</taxon>
    </lineage>
</organism>
<protein>
    <recommendedName>
        <fullName evidence="1">Protein nucleotidyltransferase YdiU</fullName>
        <ecNumber evidence="1">2.7.7.-</ecNumber>
    </recommendedName>
    <alternativeName>
        <fullName evidence="1">Protein adenylyltransferase YdiU</fullName>
        <ecNumber evidence="1">2.7.7.108</ecNumber>
    </alternativeName>
    <alternativeName>
        <fullName evidence="1">Protein uridylyltransferase YdiU</fullName>
        <ecNumber evidence="1">2.7.7.-</ecNumber>
    </alternativeName>
</protein>
<accession>Q5PH84</accession>
<sequence>MTLSFTARWRDELPATYTALLPTPLKNARLIWYNDELAQQLAIPASLFDATNGAGVWGGETLLPGMSPVAQVYSGHQFGVWAGQLGDGRGILLGEQLLADGSTLDWHLKGAGLTPYSRMGDGRAVLRSTIRESLASEAMHYLGIPTTRALSIVTSDTPVQRETQETGAMLMRLAQSHMRFGHFEHFYYRREPEKVQQLADFAIRHYWPQWQDVAEKYALWFEEVAARTGRLIAEWQTVGFAHGVMNTDNMSILGLTIDYGPFGFLDDYDPGFIGNHSDHQGRYRFDNQPSVALWNLQRLAQTLTPFIEIDALNRALDRYQDALLTHYGQRMRQKLGFFTEQKDDNVLLNELFSLMAREGSDYTRTFRMLSHTEQQSASSPLRDTFIDRAAFDAWFDRYRARLRTEAVDDALRQQQMQRVNPAIVLRNWLAQRAIDAAEQGDMAELHRLHEVLRQPFTDRDDDYASRPPEWGKRLEVSCSS</sequence>